<geneLocation type="chloroplast"/>
<evidence type="ECO:0000255" key="1">
    <source>
        <dbReference type="HAMAP-Rule" id="MF_01338"/>
    </source>
</evidence>
<name>RBL_PINPI</name>
<protein>
    <recommendedName>
        <fullName evidence="1">Ribulose bisphosphate carboxylase large chain</fullName>
        <shortName evidence="1">RuBisCO large subunit</shortName>
        <ecNumber evidence="1">4.1.1.39</ecNumber>
    </recommendedName>
</protein>
<comment type="function">
    <text evidence="1">RuBisCO catalyzes two reactions: the carboxylation of D-ribulose 1,5-bisphosphate, the primary event in carbon dioxide fixation, as well as the oxidative fragmentation of the pentose substrate in the photorespiration process. Both reactions occur simultaneously and in competition at the same active site.</text>
</comment>
<comment type="catalytic activity">
    <reaction evidence="1">
        <text>2 (2R)-3-phosphoglycerate + 2 H(+) = D-ribulose 1,5-bisphosphate + CO2 + H2O</text>
        <dbReference type="Rhea" id="RHEA:23124"/>
        <dbReference type="ChEBI" id="CHEBI:15377"/>
        <dbReference type="ChEBI" id="CHEBI:15378"/>
        <dbReference type="ChEBI" id="CHEBI:16526"/>
        <dbReference type="ChEBI" id="CHEBI:57870"/>
        <dbReference type="ChEBI" id="CHEBI:58272"/>
        <dbReference type="EC" id="4.1.1.39"/>
    </reaction>
</comment>
<comment type="catalytic activity">
    <reaction evidence="1">
        <text>D-ribulose 1,5-bisphosphate + O2 = 2-phosphoglycolate + (2R)-3-phosphoglycerate + 2 H(+)</text>
        <dbReference type="Rhea" id="RHEA:36631"/>
        <dbReference type="ChEBI" id="CHEBI:15378"/>
        <dbReference type="ChEBI" id="CHEBI:15379"/>
        <dbReference type="ChEBI" id="CHEBI:57870"/>
        <dbReference type="ChEBI" id="CHEBI:58033"/>
        <dbReference type="ChEBI" id="CHEBI:58272"/>
    </reaction>
</comment>
<comment type="cofactor">
    <cofactor evidence="1">
        <name>Mg(2+)</name>
        <dbReference type="ChEBI" id="CHEBI:18420"/>
    </cofactor>
    <text evidence="1">Binds 1 Mg(2+) ion per subunit.</text>
</comment>
<comment type="subunit">
    <text evidence="1">Heterohexadecamer of 8 large chains and 8 small chains; disulfide-linked. The disulfide link is formed within the large subunit homodimers.</text>
</comment>
<comment type="subcellular location">
    <subcellularLocation>
        <location>Plastid</location>
        <location>Chloroplast</location>
    </subcellularLocation>
</comment>
<comment type="PTM">
    <text evidence="1">The disulfide bond which can form in the large chain dimeric partners within the hexadecamer appears to be associated with oxidative stress and protein turnover.</text>
</comment>
<comment type="miscellaneous">
    <text evidence="1">The basic functional RuBisCO is composed of a large chain homodimer in a 'head-to-tail' conformation. In form I RuBisCO this homodimer is arranged in a barrel-like tetramer with the small subunits forming a tetrameric 'cap' on each end of the 'barrel'.</text>
</comment>
<comment type="similarity">
    <text evidence="1">Belongs to the RuBisCO large chain family. Type I subfamily.</text>
</comment>
<dbReference type="EC" id="4.1.1.39" evidence="1"/>
<dbReference type="EMBL" id="X58133">
    <property type="protein sequence ID" value="CAA41141.1"/>
    <property type="molecule type" value="Genomic_DNA"/>
</dbReference>
<dbReference type="PIR" id="E46161">
    <property type="entry name" value="RKSZLI"/>
</dbReference>
<dbReference type="RefSeq" id="YP_009522292.1">
    <property type="nucleotide sequence ID" value="NC_039585.1"/>
</dbReference>
<dbReference type="SMR" id="P24678"/>
<dbReference type="GeneID" id="38284227"/>
<dbReference type="GO" id="GO:0009507">
    <property type="term" value="C:chloroplast"/>
    <property type="evidence" value="ECO:0007669"/>
    <property type="project" value="UniProtKB-SubCell"/>
</dbReference>
<dbReference type="GO" id="GO:0000287">
    <property type="term" value="F:magnesium ion binding"/>
    <property type="evidence" value="ECO:0007669"/>
    <property type="project" value="UniProtKB-UniRule"/>
</dbReference>
<dbReference type="GO" id="GO:0004497">
    <property type="term" value="F:monooxygenase activity"/>
    <property type="evidence" value="ECO:0007669"/>
    <property type="project" value="UniProtKB-KW"/>
</dbReference>
<dbReference type="GO" id="GO:0016984">
    <property type="term" value="F:ribulose-bisphosphate carboxylase activity"/>
    <property type="evidence" value="ECO:0007669"/>
    <property type="project" value="UniProtKB-UniRule"/>
</dbReference>
<dbReference type="GO" id="GO:0009853">
    <property type="term" value="P:photorespiration"/>
    <property type="evidence" value="ECO:0007669"/>
    <property type="project" value="UniProtKB-KW"/>
</dbReference>
<dbReference type="GO" id="GO:0019253">
    <property type="term" value="P:reductive pentose-phosphate cycle"/>
    <property type="evidence" value="ECO:0007669"/>
    <property type="project" value="UniProtKB-UniRule"/>
</dbReference>
<dbReference type="CDD" id="cd08212">
    <property type="entry name" value="RuBisCO_large_I"/>
    <property type="match status" value="1"/>
</dbReference>
<dbReference type="FunFam" id="3.20.20.110:FF:000001">
    <property type="entry name" value="Ribulose bisphosphate carboxylase large chain"/>
    <property type="match status" value="1"/>
</dbReference>
<dbReference type="FunFam" id="3.30.70.150:FF:000001">
    <property type="entry name" value="Ribulose bisphosphate carboxylase large chain"/>
    <property type="match status" value="1"/>
</dbReference>
<dbReference type="Gene3D" id="3.20.20.110">
    <property type="entry name" value="Ribulose bisphosphate carboxylase, large subunit, C-terminal domain"/>
    <property type="match status" value="1"/>
</dbReference>
<dbReference type="Gene3D" id="3.30.70.150">
    <property type="entry name" value="RuBisCO large subunit, N-terminal domain"/>
    <property type="match status" value="1"/>
</dbReference>
<dbReference type="HAMAP" id="MF_01338">
    <property type="entry name" value="RuBisCO_L_type1"/>
    <property type="match status" value="1"/>
</dbReference>
<dbReference type="InterPro" id="IPR033966">
    <property type="entry name" value="RuBisCO"/>
</dbReference>
<dbReference type="InterPro" id="IPR020878">
    <property type="entry name" value="RuBisCo_large_chain_AS"/>
</dbReference>
<dbReference type="InterPro" id="IPR000685">
    <property type="entry name" value="RuBisCO_lsu_C"/>
</dbReference>
<dbReference type="InterPro" id="IPR036376">
    <property type="entry name" value="RuBisCO_lsu_C_sf"/>
</dbReference>
<dbReference type="InterPro" id="IPR017443">
    <property type="entry name" value="RuBisCO_lsu_fd_N"/>
</dbReference>
<dbReference type="InterPro" id="IPR036422">
    <property type="entry name" value="RuBisCO_lsu_N_sf"/>
</dbReference>
<dbReference type="InterPro" id="IPR020888">
    <property type="entry name" value="RuBisCO_lsuI"/>
</dbReference>
<dbReference type="NCBIfam" id="NF003252">
    <property type="entry name" value="PRK04208.1"/>
    <property type="match status" value="1"/>
</dbReference>
<dbReference type="PANTHER" id="PTHR42704">
    <property type="entry name" value="RIBULOSE BISPHOSPHATE CARBOXYLASE"/>
    <property type="match status" value="1"/>
</dbReference>
<dbReference type="PANTHER" id="PTHR42704:SF15">
    <property type="entry name" value="RIBULOSE BISPHOSPHATE CARBOXYLASE LARGE CHAIN"/>
    <property type="match status" value="1"/>
</dbReference>
<dbReference type="Pfam" id="PF00016">
    <property type="entry name" value="RuBisCO_large"/>
    <property type="match status" value="1"/>
</dbReference>
<dbReference type="Pfam" id="PF02788">
    <property type="entry name" value="RuBisCO_large_N"/>
    <property type="match status" value="1"/>
</dbReference>
<dbReference type="SFLD" id="SFLDG01052">
    <property type="entry name" value="RuBisCO"/>
    <property type="match status" value="1"/>
</dbReference>
<dbReference type="SFLD" id="SFLDS00014">
    <property type="entry name" value="RuBisCO"/>
    <property type="match status" value="1"/>
</dbReference>
<dbReference type="SFLD" id="SFLDG00301">
    <property type="entry name" value="RuBisCO-like_proteins"/>
    <property type="match status" value="1"/>
</dbReference>
<dbReference type="SUPFAM" id="SSF51649">
    <property type="entry name" value="RuBisCo, C-terminal domain"/>
    <property type="match status" value="1"/>
</dbReference>
<dbReference type="SUPFAM" id="SSF54966">
    <property type="entry name" value="RuBisCO, large subunit, small (N-terminal) domain"/>
    <property type="match status" value="1"/>
</dbReference>
<dbReference type="PROSITE" id="PS00157">
    <property type="entry name" value="RUBISCO_LARGE"/>
    <property type="match status" value="1"/>
</dbReference>
<feature type="propeptide" id="PRO_0000031365" evidence="1">
    <location>
        <begin position="1"/>
        <end position="2"/>
    </location>
</feature>
<feature type="chain" id="PRO_0000031366" description="Ribulose bisphosphate carboxylase large chain">
    <location>
        <begin position="3"/>
        <end position="475"/>
    </location>
</feature>
<feature type="active site" description="Proton acceptor" evidence="1">
    <location>
        <position position="175"/>
    </location>
</feature>
<feature type="active site" description="Proton acceptor" evidence="1">
    <location>
        <position position="294"/>
    </location>
</feature>
<feature type="binding site" description="in homodimeric partner" evidence="1">
    <location>
        <position position="123"/>
    </location>
    <ligand>
        <name>substrate</name>
    </ligand>
</feature>
<feature type="binding site" evidence="1">
    <location>
        <position position="173"/>
    </location>
    <ligand>
        <name>substrate</name>
    </ligand>
</feature>
<feature type="binding site" evidence="1">
    <location>
        <position position="177"/>
    </location>
    <ligand>
        <name>substrate</name>
    </ligand>
</feature>
<feature type="binding site" description="via carbamate group" evidence="1">
    <location>
        <position position="201"/>
    </location>
    <ligand>
        <name>Mg(2+)</name>
        <dbReference type="ChEBI" id="CHEBI:18420"/>
    </ligand>
</feature>
<feature type="binding site" evidence="1">
    <location>
        <position position="203"/>
    </location>
    <ligand>
        <name>Mg(2+)</name>
        <dbReference type="ChEBI" id="CHEBI:18420"/>
    </ligand>
</feature>
<feature type="binding site" evidence="1">
    <location>
        <position position="204"/>
    </location>
    <ligand>
        <name>Mg(2+)</name>
        <dbReference type="ChEBI" id="CHEBI:18420"/>
    </ligand>
</feature>
<feature type="binding site" evidence="1">
    <location>
        <position position="295"/>
    </location>
    <ligand>
        <name>substrate</name>
    </ligand>
</feature>
<feature type="binding site" evidence="1">
    <location>
        <position position="327"/>
    </location>
    <ligand>
        <name>substrate</name>
    </ligand>
</feature>
<feature type="binding site" evidence="1">
    <location>
        <position position="379"/>
    </location>
    <ligand>
        <name>substrate</name>
    </ligand>
</feature>
<feature type="site" description="Transition state stabilizer" evidence="1">
    <location>
        <position position="334"/>
    </location>
</feature>
<feature type="modified residue" description="N-acetylproline" evidence="1">
    <location>
        <position position="3"/>
    </location>
</feature>
<feature type="modified residue" description="N6,N6,N6-trimethyllysine" evidence="1">
    <location>
        <position position="14"/>
    </location>
</feature>
<feature type="modified residue" description="N6-carboxylysine" evidence="1">
    <location>
        <position position="201"/>
    </location>
</feature>
<feature type="disulfide bond" description="Interchain; in linked form" evidence="1">
    <location>
        <position position="247"/>
    </location>
</feature>
<sequence length="475" mass="52742">MSPKTETKASVGFKAGVKDYRLTYYTPEYQTKDTDILAAFRVTPQPGVPPEEAGAAVAAESSTGTWTTVWTDGLTSLDRYKGRCYDIEPVPGEETQFIAYVAYPLDLFEEGSVTNLFTSIVGNVFGFKALRALRLEDLRIPPSYSKTFQGPPHGIQVERDKLNKYGRPLLGCTIKPKLGLSAKNYGRAVYECLRGGLDFTKDDENVNSQPFMRWRDRFVFCAEAINKAQAETGEIKGHYLNATAGTCEEMIKRAVFARELGVPIVMHDYLTGGFTANTSLAHYCRDNGLLLHIHRAMHAVIDRQRNHGMHFRVLAKALRMSGGDHIHAGTVVGKLEGERDVTLGFVDLLRDDFIEKDRSRGIYFTQDWVSMPGVMPVASGGIHVWHMPALTEIFGDDSVLQFGGGTLGHPWGNAPGAVANRVALEACVQARNEGRDLAREGNEVIREACKWSPELAAACEIWKEIKFEFDVIDRL</sequence>
<accession>P24678</accession>
<organism>
    <name type="scientific">Pinus pinea</name>
    <name type="common">Italian stone pine</name>
    <dbReference type="NCBI Taxonomy" id="3346"/>
    <lineage>
        <taxon>Eukaryota</taxon>
        <taxon>Viridiplantae</taxon>
        <taxon>Streptophyta</taxon>
        <taxon>Embryophyta</taxon>
        <taxon>Tracheophyta</taxon>
        <taxon>Spermatophyta</taxon>
        <taxon>Pinopsida</taxon>
        <taxon>Pinidae</taxon>
        <taxon>Conifers I</taxon>
        <taxon>Pinales</taxon>
        <taxon>Pinaceae</taxon>
        <taxon>Pinus</taxon>
        <taxon>Pinus subgen. Pinus</taxon>
    </lineage>
</organism>
<keyword id="KW-0007">Acetylation</keyword>
<keyword id="KW-0113">Calvin cycle</keyword>
<keyword id="KW-0120">Carbon dioxide fixation</keyword>
<keyword id="KW-0150">Chloroplast</keyword>
<keyword id="KW-1015">Disulfide bond</keyword>
<keyword id="KW-0456">Lyase</keyword>
<keyword id="KW-0460">Magnesium</keyword>
<keyword id="KW-0479">Metal-binding</keyword>
<keyword id="KW-0488">Methylation</keyword>
<keyword id="KW-0503">Monooxygenase</keyword>
<keyword id="KW-0560">Oxidoreductase</keyword>
<keyword id="KW-0601">Photorespiration</keyword>
<keyword id="KW-0602">Photosynthesis</keyword>
<keyword id="KW-0934">Plastid</keyword>
<gene>
    <name evidence="1" type="primary">rbcL</name>
</gene>
<reference key="1">
    <citation type="journal article" date="1992" name="Proc. Natl. Acad. Sci. U.S.A.">
        <title>Extensive variation in evolutionary rate of rbcL gene sequences among seed plants.</title>
        <authorList>
            <person name="Bousquet J."/>
            <person name="Strauss S.H."/>
            <person name="Doerksen A.H."/>
            <person name="Price R.A."/>
        </authorList>
    </citation>
    <scope>NUCLEOTIDE SEQUENCE [GENOMIC DNA]</scope>
</reference>
<proteinExistence type="inferred from homology"/>